<organism>
    <name type="scientific">Escherichia coli O139:H28 (strain E24377A / ETEC)</name>
    <dbReference type="NCBI Taxonomy" id="331111"/>
    <lineage>
        <taxon>Bacteria</taxon>
        <taxon>Pseudomonadati</taxon>
        <taxon>Pseudomonadota</taxon>
        <taxon>Gammaproteobacteria</taxon>
        <taxon>Enterobacterales</taxon>
        <taxon>Enterobacteriaceae</taxon>
        <taxon>Escherichia</taxon>
    </lineage>
</organism>
<feature type="chain" id="PRO_1000064967" description="UPF0208 membrane protein YfbV">
    <location>
        <begin position="1"/>
        <end position="151"/>
    </location>
</feature>
<feature type="transmembrane region" description="Helical" evidence="1">
    <location>
        <begin position="46"/>
        <end position="65"/>
    </location>
</feature>
<feature type="transmembrane region" description="Helical" evidence="1">
    <location>
        <begin position="69"/>
        <end position="91"/>
    </location>
</feature>
<accession>A7ZPA9</accession>
<sequence length="151" mass="17213">MSTPDNRSVNFFSLFRRGQHYSKTWPLEKRLAPVFVENRVIKMTRYAIRFMPPIAVFTLCWQIALGGQLGPAVATALFALSLPMQGLWWLGKRSVTPLPPAILNWFYEVRGKLQESGQVLAPVEGKPDYQALADTLKRAFKQLDKTFLDDL</sequence>
<keyword id="KW-0997">Cell inner membrane</keyword>
<keyword id="KW-1003">Cell membrane</keyword>
<keyword id="KW-0472">Membrane</keyword>
<keyword id="KW-1185">Reference proteome</keyword>
<keyword id="KW-0812">Transmembrane</keyword>
<keyword id="KW-1133">Transmembrane helix</keyword>
<dbReference type="EMBL" id="CP000800">
    <property type="protein sequence ID" value="ABV17997.1"/>
    <property type="molecule type" value="Genomic_DNA"/>
</dbReference>
<dbReference type="RefSeq" id="WP_000106627.1">
    <property type="nucleotide sequence ID" value="NC_009801.1"/>
</dbReference>
<dbReference type="GeneID" id="93774879"/>
<dbReference type="KEGG" id="ecw:EcE24377A_2588"/>
<dbReference type="HOGENOM" id="CLU_128746_0_0_6"/>
<dbReference type="Proteomes" id="UP000001122">
    <property type="component" value="Chromosome"/>
</dbReference>
<dbReference type="GO" id="GO:0005886">
    <property type="term" value="C:plasma membrane"/>
    <property type="evidence" value="ECO:0007669"/>
    <property type="project" value="UniProtKB-SubCell"/>
</dbReference>
<dbReference type="HAMAP" id="MF_01101">
    <property type="entry name" value="UPF0208"/>
    <property type="match status" value="1"/>
</dbReference>
<dbReference type="InterPro" id="IPR007334">
    <property type="entry name" value="UPF0208"/>
</dbReference>
<dbReference type="NCBIfam" id="NF002493">
    <property type="entry name" value="PRK01816.1"/>
    <property type="match status" value="1"/>
</dbReference>
<dbReference type="Pfam" id="PF04217">
    <property type="entry name" value="DUF412"/>
    <property type="match status" value="1"/>
</dbReference>
<reference key="1">
    <citation type="journal article" date="2008" name="J. Bacteriol.">
        <title>The pangenome structure of Escherichia coli: comparative genomic analysis of E. coli commensal and pathogenic isolates.</title>
        <authorList>
            <person name="Rasko D.A."/>
            <person name="Rosovitz M.J."/>
            <person name="Myers G.S.A."/>
            <person name="Mongodin E.F."/>
            <person name="Fricke W.F."/>
            <person name="Gajer P."/>
            <person name="Crabtree J."/>
            <person name="Sebaihia M."/>
            <person name="Thomson N.R."/>
            <person name="Chaudhuri R."/>
            <person name="Henderson I.R."/>
            <person name="Sperandio V."/>
            <person name="Ravel J."/>
        </authorList>
    </citation>
    <scope>NUCLEOTIDE SEQUENCE [LARGE SCALE GENOMIC DNA]</scope>
    <source>
        <strain>E24377A / ETEC</strain>
    </source>
</reference>
<gene>
    <name evidence="1" type="primary">yfbV</name>
    <name type="ordered locus">EcE24377A_2588</name>
</gene>
<proteinExistence type="inferred from homology"/>
<evidence type="ECO:0000255" key="1">
    <source>
        <dbReference type="HAMAP-Rule" id="MF_01101"/>
    </source>
</evidence>
<name>YFBV_ECO24</name>
<protein>
    <recommendedName>
        <fullName evidence="1">UPF0208 membrane protein YfbV</fullName>
    </recommendedName>
</protein>
<comment type="subcellular location">
    <subcellularLocation>
        <location evidence="1">Cell inner membrane</location>
        <topology evidence="1">Multi-pass membrane protein</topology>
    </subcellularLocation>
</comment>
<comment type="similarity">
    <text evidence="1">Belongs to the UPF0208 family.</text>
</comment>